<dbReference type="EC" id="1.14.14.1"/>
<dbReference type="EMBL" id="X63022">
    <property type="protein sequence ID" value="CAA44753.1"/>
    <property type="molecule type" value="mRNA"/>
</dbReference>
<dbReference type="PIR" id="I48189">
    <property type="entry name" value="I48189"/>
</dbReference>
<dbReference type="RefSeq" id="NP_001268615.1">
    <property type="nucleotide sequence ID" value="NM_001281686.1"/>
</dbReference>
<dbReference type="SMR" id="Q08078"/>
<dbReference type="GeneID" id="101823450"/>
<dbReference type="KEGG" id="ag:CAA44753"/>
<dbReference type="KEGG" id="maua:101823450"/>
<dbReference type="eggNOG" id="KOG0156">
    <property type="taxonomic scope" value="Eukaryota"/>
</dbReference>
<dbReference type="OrthoDB" id="1103324at2759"/>
<dbReference type="Proteomes" id="UP000189706">
    <property type="component" value="Unplaced"/>
</dbReference>
<dbReference type="GO" id="GO:0005789">
    <property type="term" value="C:endoplasmic reticulum membrane"/>
    <property type="evidence" value="ECO:0007669"/>
    <property type="project" value="UniProtKB-SubCell"/>
</dbReference>
<dbReference type="GO" id="GO:0020037">
    <property type="term" value="F:heme binding"/>
    <property type="evidence" value="ECO:0007669"/>
    <property type="project" value="InterPro"/>
</dbReference>
<dbReference type="GO" id="GO:0005506">
    <property type="term" value="F:iron ion binding"/>
    <property type="evidence" value="ECO:0007669"/>
    <property type="project" value="InterPro"/>
</dbReference>
<dbReference type="GO" id="GO:0016712">
    <property type="term" value="F:oxidoreductase activity, acting on paired donors, with incorporation or reduction of molecular oxygen, reduced flavin or flavoprotein as one donor, and incorporation of one atom of oxygen"/>
    <property type="evidence" value="ECO:0007669"/>
    <property type="project" value="UniProtKB-EC"/>
</dbReference>
<dbReference type="GO" id="GO:0006082">
    <property type="term" value="P:organic acid metabolic process"/>
    <property type="evidence" value="ECO:0007669"/>
    <property type="project" value="TreeGrafter"/>
</dbReference>
<dbReference type="GO" id="GO:0006805">
    <property type="term" value="P:xenobiotic metabolic process"/>
    <property type="evidence" value="ECO:0007669"/>
    <property type="project" value="TreeGrafter"/>
</dbReference>
<dbReference type="CDD" id="cd20665">
    <property type="entry name" value="CYP2C-like"/>
    <property type="match status" value="1"/>
</dbReference>
<dbReference type="FunFam" id="1.10.630.10:FF:000299">
    <property type="entry name" value="Cytochrome P450 2C9"/>
    <property type="match status" value="1"/>
</dbReference>
<dbReference type="Gene3D" id="1.10.630.10">
    <property type="entry name" value="Cytochrome P450"/>
    <property type="match status" value="1"/>
</dbReference>
<dbReference type="InterPro" id="IPR001128">
    <property type="entry name" value="Cyt_P450"/>
</dbReference>
<dbReference type="InterPro" id="IPR017972">
    <property type="entry name" value="Cyt_P450_CS"/>
</dbReference>
<dbReference type="InterPro" id="IPR002401">
    <property type="entry name" value="Cyt_P450_E_grp-I"/>
</dbReference>
<dbReference type="InterPro" id="IPR036396">
    <property type="entry name" value="Cyt_P450_sf"/>
</dbReference>
<dbReference type="InterPro" id="IPR050182">
    <property type="entry name" value="Cytochrome_P450_fam2"/>
</dbReference>
<dbReference type="PANTHER" id="PTHR24300:SF384">
    <property type="entry name" value="CYTOCHROME P450 2C29-RELATED"/>
    <property type="match status" value="1"/>
</dbReference>
<dbReference type="PANTHER" id="PTHR24300">
    <property type="entry name" value="CYTOCHROME P450 508A4-RELATED"/>
    <property type="match status" value="1"/>
</dbReference>
<dbReference type="Pfam" id="PF00067">
    <property type="entry name" value="p450"/>
    <property type="match status" value="1"/>
</dbReference>
<dbReference type="PRINTS" id="PR00463">
    <property type="entry name" value="EP450I"/>
</dbReference>
<dbReference type="PRINTS" id="PR00385">
    <property type="entry name" value="P450"/>
</dbReference>
<dbReference type="SUPFAM" id="SSF48264">
    <property type="entry name" value="Cytochrome P450"/>
    <property type="match status" value="1"/>
</dbReference>
<dbReference type="PROSITE" id="PS00086">
    <property type="entry name" value="CYTOCHROME_P450"/>
    <property type="match status" value="1"/>
</dbReference>
<gene>
    <name type="primary">CYP2C25</name>
</gene>
<feature type="chain" id="PRO_0000051713" description="Cytochrome P450 2C25">
    <location>
        <begin position="1"/>
        <end position="490"/>
    </location>
</feature>
<feature type="binding site" description="axial binding residue" evidence="1">
    <location>
        <position position="435"/>
    </location>
    <ligand>
        <name>heme</name>
        <dbReference type="ChEBI" id="CHEBI:30413"/>
    </ligand>
    <ligandPart>
        <name>Fe</name>
        <dbReference type="ChEBI" id="CHEBI:18248"/>
    </ligandPart>
</feature>
<name>CP2CP_MESAU</name>
<accession>Q08078</accession>
<proteinExistence type="evidence at transcript level"/>
<organism>
    <name type="scientific">Mesocricetus auratus</name>
    <name type="common">Golden hamster</name>
    <dbReference type="NCBI Taxonomy" id="10036"/>
    <lineage>
        <taxon>Eukaryota</taxon>
        <taxon>Metazoa</taxon>
        <taxon>Chordata</taxon>
        <taxon>Craniata</taxon>
        <taxon>Vertebrata</taxon>
        <taxon>Euteleostomi</taxon>
        <taxon>Mammalia</taxon>
        <taxon>Eutheria</taxon>
        <taxon>Euarchontoglires</taxon>
        <taxon>Glires</taxon>
        <taxon>Rodentia</taxon>
        <taxon>Myomorpha</taxon>
        <taxon>Muroidea</taxon>
        <taxon>Cricetidae</taxon>
        <taxon>Cricetinae</taxon>
        <taxon>Mesocricetus</taxon>
    </lineage>
</organism>
<reference key="1">
    <citation type="journal article" date="1994" name="Mol. Pharmacol.">
        <title>Sex-related differences in the expression of cytochrome P450 in hamsters: cDNA cloning and examination of the expression of three distinct CYP2C cDNAs.</title>
        <authorList>
            <person name="Sakuma T."/>
            <person name="Masaki K."/>
            <person name="Itoh S."/>
            <person name="Yokoi T."/>
            <person name="Kamataki T."/>
        </authorList>
    </citation>
    <scope>NUCLEOTIDE SEQUENCE [MRNA]</scope>
    <source>
        <tissue>Liver</tissue>
    </source>
</reference>
<sequence>MDAVLVLVFILSSLVFLSLWRQSSERRKLPPGPTPLPIIGNFLQIDVKNISGSLTNFSKVYGPVFTLYLGMKPTVVLHGYETVKEALIDHGEEFAGRGDFPMAERINKGLGIVFSNGNRWKEIRRFSLMTLRNLGMGKRNIEDRVQEEAQCLVEELRKTNGSPCDPTFILSCAPCNVICSIIFQNRFDYKDQDFLTFMKKVNENVRILSSPWLQVCNNFPSLIDYCPGSHHKITKNVNYLKKYILEKIEEHQESLDIENPRDFIDYYLIKLKQANHNQQSEFSLENLTTTVSDLFGAGTETTSTTLRYALLLLLKHPHVTAKVQEEIDQVVGRHRKPCMQDRSHMPYTDAMIHEVQRFIDLIPISLPHAVTCDIKFRDYFIPKGTTVITSLSSVLHDNKEFPNPEVFDPGHFLDKNGNFKKSDYFMPFSAGKRICAGEGLARMELFLFLTTILQNFKLKSMIHPKDIDTTPVVNGFASLPPSYQLCFIPV</sequence>
<comment type="function">
    <text>Catalyzes the hydroxylation of tolbutamide and the N-demethylation of aminopyrine and benzphetamine. Also has testosterone hydroxylase (16 beta) activity.</text>
</comment>
<comment type="catalytic activity">
    <reaction>
        <text>an organic molecule + reduced [NADPH--hemoprotein reductase] + O2 = an alcohol + oxidized [NADPH--hemoprotein reductase] + H2O + H(+)</text>
        <dbReference type="Rhea" id="RHEA:17149"/>
        <dbReference type="Rhea" id="RHEA-COMP:11964"/>
        <dbReference type="Rhea" id="RHEA-COMP:11965"/>
        <dbReference type="ChEBI" id="CHEBI:15377"/>
        <dbReference type="ChEBI" id="CHEBI:15378"/>
        <dbReference type="ChEBI" id="CHEBI:15379"/>
        <dbReference type="ChEBI" id="CHEBI:30879"/>
        <dbReference type="ChEBI" id="CHEBI:57618"/>
        <dbReference type="ChEBI" id="CHEBI:58210"/>
        <dbReference type="ChEBI" id="CHEBI:142491"/>
        <dbReference type="EC" id="1.14.14.1"/>
    </reaction>
</comment>
<comment type="cofactor">
    <cofactor evidence="1">
        <name>heme</name>
        <dbReference type="ChEBI" id="CHEBI:30413"/>
    </cofactor>
</comment>
<comment type="subcellular location">
    <subcellularLocation>
        <location>Endoplasmic reticulum membrane</location>
        <topology>Peripheral membrane protein</topology>
    </subcellularLocation>
    <subcellularLocation>
        <location>Microsome membrane</location>
        <topology>Peripheral membrane protein</topology>
    </subcellularLocation>
</comment>
<comment type="induction">
    <text>P450 can be induced to high levels in liver and other tissues by various foreign compounds, including drugs, pesticides, and carcinogens.</text>
</comment>
<comment type="similarity">
    <text evidence="2">Belongs to the cytochrome P450 family.</text>
</comment>
<keyword id="KW-0256">Endoplasmic reticulum</keyword>
<keyword id="KW-0349">Heme</keyword>
<keyword id="KW-0408">Iron</keyword>
<keyword id="KW-0472">Membrane</keyword>
<keyword id="KW-0479">Metal-binding</keyword>
<keyword id="KW-0492">Microsome</keyword>
<keyword id="KW-0503">Monooxygenase</keyword>
<keyword id="KW-0560">Oxidoreductase</keyword>
<keyword id="KW-1185">Reference proteome</keyword>
<evidence type="ECO:0000250" key="1"/>
<evidence type="ECO:0000305" key="2"/>
<protein>
    <recommendedName>
        <fullName>Cytochrome P450 2C25</fullName>
        <ecNumber>1.14.14.1</ecNumber>
    </recommendedName>
    <alternativeName>
        <fullName>CYPIIC25</fullName>
    </alternativeName>
    <alternativeName>
        <fullName>Cytochrome P450 HSM1</fullName>
    </alternativeName>
</protein>